<protein>
    <recommendedName>
        <fullName evidence="10">Short chain dehydrogenase mdpC</fullName>
        <ecNumber evidence="8 9">1.3.1.-</ecNumber>
    </recommendedName>
    <alternativeName>
        <fullName evidence="10">Monodictyphenone synthesis protein C</fullName>
    </alternativeName>
</protein>
<keyword id="KW-0521">NADP</keyword>
<keyword id="KW-0560">Oxidoreductase</keyword>
<keyword id="KW-1185">Reference proteome</keyword>
<dbReference type="EC" id="1.3.1.-" evidence="8 9"/>
<dbReference type="EMBL" id="BN001308">
    <property type="protein sequence ID" value="CBF90105.1"/>
    <property type="molecule type" value="Genomic_DNA"/>
</dbReference>
<dbReference type="EMBL" id="AACD01000005">
    <property type="protein sequence ID" value="EAA66019.1"/>
    <property type="molecule type" value="Genomic_DNA"/>
</dbReference>
<dbReference type="RefSeq" id="XP_657750.1">
    <property type="nucleotide sequence ID" value="XM_652658.1"/>
</dbReference>
<dbReference type="SMR" id="Q5BH34"/>
<dbReference type="STRING" id="227321.Q5BH34"/>
<dbReference type="EnsemblFungi" id="CBF90105">
    <property type="protein sequence ID" value="CBF90105"/>
    <property type="gene ID" value="ANIA_00146"/>
</dbReference>
<dbReference type="KEGG" id="ani:ANIA_00146"/>
<dbReference type="eggNOG" id="KOG0725">
    <property type="taxonomic scope" value="Eukaryota"/>
</dbReference>
<dbReference type="HOGENOM" id="CLU_010194_1_3_1"/>
<dbReference type="InParanoid" id="Q5BH34"/>
<dbReference type="OMA" id="VGQRAWP"/>
<dbReference type="OrthoDB" id="47007at2759"/>
<dbReference type="BioCyc" id="MetaCyc:MONOMER-21290"/>
<dbReference type="Proteomes" id="UP000000560">
    <property type="component" value="Chromosome VIII"/>
</dbReference>
<dbReference type="GO" id="GO:0016491">
    <property type="term" value="F:oxidoreductase activity"/>
    <property type="evidence" value="ECO:0007669"/>
    <property type="project" value="UniProtKB-KW"/>
</dbReference>
<dbReference type="GO" id="GO:0044550">
    <property type="term" value="P:secondary metabolite biosynthetic process"/>
    <property type="evidence" value="ECO:0007669"/>
    <property type="project" value="UniProtKB-ARBA"/>
</dbReference>
<dbReference type="CDD" id="cd05362">
    <property type="entry name" value="THN_reductase-like_SDR_c"/>
    <property type="match status" value="1"/>
</dbReference>
<dbReference type="FunFam" id="3.40.50.720:FF:000084">
    <property type="entry name" value="Short-chain dehydrogenase reductase"/>
    <property type="match status" value="1"/>
</dbReference>
<dbReference type="Gene3D" id="3.40.50.720">
    <property type="entry name" value="NAD(P)-binding Rossmann-like Domain"/>
    <property type="match status" value="1"/>
</dbReference>
<dbReference type="InterPro" id="IPR036291">
    <property type="entry name" value="NAD(P)-bd_dom_sf"/>
</dbReference>
<dbReference type="InterPro" id="IPR020904">
    <property type="entry name" value="Sc_DH/Rdtase_CS"/>
</dbReference>
<dbReference type="InterPro" id="IPR002347">
    <property type="entry name" value="SDR_fam"/>
</dbReference>
<dbReference type="PANTHER" id="PTHR43639">
    <property type="entry name" value="OXIDOREDUCTASE, SHORT-CHAIN DEHYDROGENASE/REDUCTASE FAMILY (AFU_ORTHOLOGUE AFUA_5G02870)"/>
    <property type="match status" value="1"/>
</dbReference>
<dbReference type="PANTHER" id="PTHR43639:SF1">
    <property type="entry name" value="SHORT-CHAIN DEHYDROGENASE_REDUCTASE FAMILY PROTEIN"/>
    <property type="match status" value="1"/>
</dbReference>
<dbReference type="Pfam" id="PF13561">
    <property type="entry name" value="adh_short_C2"/>
    <property type="match status" value="1"/>
</dbReference>
<dbReference type="PRINTS" id="PR00081">
    <property type="entry name" value="GDHRDH"/>
</dbReference>
<dbReference type="PRINTS" id="PR00080">
    <property type="entry name" value="SDRFAMILY"/>
</dbReference>
<dbReference type="SMART" id="SM00822">
    <property type="entry name" value="PKS_KR"/>
    <property type="match status" value="1"/>
</dbReference>
<dbReference type="SUPFAM" id="SSF51735">
    <property type="entry name" value="NAD(P)-binding Rossmann-fold domains"/>
    <property type="match status" value="1"/>
</dbReference>
<dbReference type="PROSITE" id="PS00061">
    <property type="entry name" value="ADH_SHORT"/>
    <property type="match status" value="1"/>
</dbReference>
<proteinExistence type="evidence at protein level"/>
<comment type="function">
    <text evidence="3 5 6 7 8 9">Short chain dehydrogenase; part of the gene cluster that mediates the biosynthesis of monodictyphenone, a prenyl xanthone derivative (PubMed:20139316, PubMed:21351751, PubMed:22730213, PubMed:22909031, PubMed:26266881). The pathway begins with the synthesis of atrochrysone thioester by the polyketide synthase (PKS) mdpG (PubMed:20139316). The atrochrysone carboxyl ACP thioesterase mdpF then breaks the thioester bond and releases the atrochrysone carboxylic acid from mdpG (PubMed:20139316). The atrochrysone carboxylic acid is then converted to atrochrysone which is further transformed into emodin anthrone (PubMed:20139316). The next step is performed by the anthrone oxygenase mdpH that catalyzes the oxidation of emodinanthrone to emodin (By similarity). Emodin is further modified to yield monodictyphenone via several steps involving mdpB, mdpC mdpJ, mdpK and mdpL (PubMed:20139316, PubMed:21351751, PubMed:22909031). The short chain dehydrogenase mdpC converts the tautomers of emodin hydroquinone into the 3-hydroxy-3,4-dihydroan-thracen-1(2H)-one derivative (PubMed:22909031, PubMed:26266881). These enzymes with xptA, xptB and xptC are also proposed to be involved in the synthesis of shamixanthone from emodin (PubMed:22730213). Especially, direct reduction of emodin by the short chain dehydrogenase mdpC followed by dehydration catalyzed by the scytalone dehydratase-like protein mdpB gives loss of oxygen and formation of chrysophanol intermediate in two simple steps (PubMed:22730213).</text>
</comment>
<comment type="catalytic activity">
    <reaction evidence="8 9">
        <text>3,8,9,10-tetrahydroxy-6-methyl-1,4-dihydroanthracen-1-one + NADPH + H(+) = (3R)-3,8,9,10-tetrahydroxy-6-methyl-1,2,3,4-tetrahydroanthracen-1-one + NADP(+)</text>
        <dbReference type="Rhea" id="RHEA:64292"/>
        <dbReference type="ChEBI" id="CHEBI:15378"/>
        <dbReference type="ChEBI" id="CHEBI:57783"/>
        <dbReference type="ChEBI" id="CHEBI:58349"/>
        <dbReference type="ChEBI" id="CHEBI:150020"/>
        <dbReference type="ChEBI" id="CHEBI:150021"/>
    </reaction>
    <physiologicalReaction direction="left-to-right" evidence="8">
        <dbReference type="Rhea" id="RHEA:64293"/>
    </physiologicalReaction>
</comment>
<comment type="pathway">
    <text evidence="5 6 7 8 9">Secondary metabolite biosynthesis.</text>
</comment>
<comment type="disruption phenotype">
    <text evidence="5 6 7">Impairs the production of monodictyphenone, but still enables the synthesis of intermediates until emodin.</text>
</comment>
<comment type="similarity">
    <text evidence="11">Belongs to the short-chain dehydrogenases/reductases (SDR) family.</text>
</comment>
<accession>Q5BH34</accession>
<accession>C8VQ70</accession>
<sequence length="265" mass="28448">MTATTHAPYRLEGKVALVTGSGRGIGAAMALELGRLGAKVVVNYANSREPAEKLVQEIKELGTDAIALQANIRNVSEIVRVMDDAVAHFGGLDIVCSNAGVVSFGHLGEVTEEEFDRVFSLNTRAQFFVAREAYRHLNTHGRIILMSSNTAKEFSVPRHSVYSGSKGAIESFVRVMAKDCGDKQITVNAVAPGGTVTDMFYDVAQHYIPNGEKHSAEELQKMAATVSPLKRNGFPVDIAKVVGFLASREAEWVNGKIITVDGGAA</sequence>
<organism>
    <name type="scientific">Emericella nidulans (strain FGSC A4 / ATCC 38163 / CBS 112.46 / NRRL 194 / M139)</name>
    <name type="common">Aspergillus nidulans</name>
    <dbReference type="NCBI Taxonomy" id="227321"/>
    <lineage>
        <taxon>Eukaryota</taxon>
        <taxon>Fungi</taxon>
        <taxon>Dikarya</taxon>
        <taxon>Ascomycota</taxon>
        <taxon>Pezizomycotina</taxon>
        <taxon>Eurotiomycetes</taxon>
        <taxon>Eurotiomycetidae</taxon>
        <taxon>Eurotiales</taxon>
        <taxon>Aspergillaceae</taxon>
        <taxon>Aspergillus</taxon>
        <taxon>Aspergillus subgen. Nidulantes</taxon>
    </lineage>
</organism>
<reference key="1">
    <citation type="journal article" date="2005" name="Nature">
        <title>Sequencing of Aspergillus nidulans and comparative analysis with A. fumigatus and A. oryzae.</title>
        <authorList>
            <person name="Galagan J.E."/>
            <person name="Calvo S.E."/>
            <person name="Cuomo C."/>
            <person name="Ma L.-J."/>
            <person name="Wortman J.R."/>
            <person name="Batzoglou S."/>
            <person name="Lee S.-I."/>
            <person name="Bastuerkmen M."/>
            <person name="Spevak C.C."/>
            <person name="Clutterbuck J."/>
            <person name="Kapitonov V."/>
            <person name="Jurka J."/>
            <person name="Scazzocchio C."/>
            <person name="Farman M.L."/>
            <person name="Butler J."/>
            <person name="Purcell S."/>
            <person name="Harris S."/>
            <person name="Braus G.H."/>
            <person name="Draht O."/>
            <person name="Busch S."/>
            <person name="D'Enfert C."/>
            <person name="Bouchier C."/>
            <person name="Goldman G.H."/>
            <person name="Bell-Pedersen D."/>
            <person name="Griffiths-Jones S."/>
            <person name="Doonan J.H."/>
            <person name="Yu J."/>
            <person name="Vienken K."/>
            <person name="Pain A."/>
            <person name="Freitag M."/>
            <person name="Selker E.U."/>
            <person name="Archer D.B."/>
            <person name="Penalva M.A."/>
            <person name="Oakley B.R."/>
            <person name="Momany M."/>
            <person name="Tanaka T."/>
            <person name="Kumagai T."/>
            <person name="Asai K."/>
            <person name="Machida M."/>
            <person name="Nierman W.C."/>
            <person name="Denning D.W."/>
            <person name="Caddick M.X."/>
            <person name="Hynes M."/>
            <person name="Paoletti M."/>
            <person name="Fischer R."/>
            <person name="Miller B.L."/>
            <person name="Dyer P.S."/>
            <person name="Sachs M.S."/>
            <person name="Osmani S.A."/>
            <person name="Birren B.W."/>
        </authorList>
    </citation>
    <scope>NUCLEOTIDE SEQUENCE [LARGE SCALE GENOMIC DNA]</scope>
    <source>
        <strain>FGSC A4 / ATCC 38163 / CBS 112.46 / NRRL 194 / M139</strain>
    </source>
</reference>
<reference key="2">
    <citation type="journal article" date="2009" name="Fungal Genet. Biol.">
        <title>The 2008 update of the Aspergillus nidulans genome annotation: a community effort.</title>
        <authorList>
            <person name="Wortman J.R."/>
            <person name="Gilsenan J.M."/>
            <person name="Joardar V."/>
            <person name="Deegan J."/>
            <person name="Clutterbuck J."/>
            <person name="Andersen M.R."/>
            <person name="Archer D."/>
            <person name="Bencina M."/>
            <person name="Braus G."/>
            <person name="Coutinho P."/>
            <person name="von Dohren H."/>
            <person name="Doonan J."/>
            <person name="Driessen A.J."/>
            <person name="Durek P."/>
            <person name="Espeso E."/>
            <person name="Fekete E."/>
            <person name="Flipphi M."/>
            <person name="Estrada C.G."/>
            <person name="Geysens S."/>
            <person name="Goldman G."/>
            <person name="de Groot P.W."/>
            <person name="Hansen K."/>
            <person name="Harris S.D."/>
            <person name="Heinekamp T."/>
            <person name="Helmstaedt K."/>
            <person name="Henrissat B."/>
            <person name="Hofmann G."/>
            <person name="Homan T."/>
            <person name="Horio T."/>
            <person name="Horiuchi H."/>
            <person name="James S."/>
            <person name="Jones M."/>
            <person name="Karaffa L."/>
            <person name="Karanyi Z."/>
            <person name="Kato M."/>
            <person name="Keller N."/>
            <person name="Kelly D.E."/>
            <person name="Kiel J.A."/>
            <person name="Kim J.M."/>
            <person name="van der Klei I.J."/>
            <person name="Klis F.M."/>
            <person name="Kovalchuk A."/>
            <person name="Krasevec N."/>
            <person name="Kubicek C.P."/>
            <person name="Liu B."/>
            <person name="Maccabe A."/>
            <person name="Meyer V."/>
            <person name="Mirabito P."/>
            <person name="Miskei M."/>
            <person name="Mos M."/>
            <person name="Mullins J."/>
            <person name="Nelson D.R."/>
            <person name="Nielsen J."/>
            <person name="Oakley B.R."/>
            <person name="Osmani S.A."/>
            <person name="Pakula T."/>
            <person name="Paszewski A."/>
            <person name="Paulsen I."/>
            <person name="Pilsyk S."/>
            <person name="Pocsi I."/>
            <person name="Punt P.J."/>
            <person name="Ram A.F."/>
            <person name="Ren Q."/>
            <person name="Robellet X."/>
            <person name="Robson G."/>
            <person name="Seiboth B."/>
            <person name="van Solingen P."/>
            <person name="Specht T."/>
            <person name="Sun J."/>
            <person name="Taheri-Talesh N."/>
            <person name="Takeshita N."/>
            <person name="Ussery D."/>
            <person name="vanKuyk P.A."/>
            <person name="Visser H."/>
            <person name="van de Vondervoort P.J."/>
            <person name="de Vries R.P."/>
            <person name="Walton J."/>
            <person name="Xiang X."/>
            <person name="Xiong Y."/>
            <person name="Zeng A.P."/>
            <person name="Brandt B.W."/>
            <person name="Cornell M.J."/>
            <person name="van den Hondel C.A."/>
            <person name="Visser J."/>
            <person name="Oliver S.G."/>
            <person name="Turner G."/>
        </authorList>
    </citation>
    <scope>GENOME REANNOTATION</scope>
    <source>
        <strain>FGSC A4 / ATCC 38163 / CBS 112.46 / NRRL 194 / M139</strain>
    </source>
</reference>
<reference key="3">
    <citation type="journal article" date="2010" name="Appl. Environ. Microbiol.">
        <title>Characterization of the Aspergillus nidulans monodictyphenone gene cluster.</title>
        <authorList>
            <person name="Chiang Y.M."/>
            <person name="Szewczyk E."/>
            <person name="Davidson A.D."/>
            <person name="Entwistle R."/>
            <person name="Keller N.P."/>
            <person name="Wang C.C."/>
            <person name="Oakley B.R."/>
        </authorList>
    </citation>
    <scope>FUNCTION</scope>
    <scope>DISRUPTION PHENOTYPE</scope>
    <scope>PATHWAY</scope>
</reference>
<reference key="4">
    <citation type="journal article" date="2011" name="J. Am. Chem. Soc.">
        <title>Genome-based deletion analysis reveals the prenyl xanthone biosynthesis pathway in Aspergillus nidulans.</title>
        <authorList>
            <person name="Sanchez J.F."/>
            <person name="Entwistle R."/>
            <person name="Hung J.H."/>
            <person name="Yaegashi J."/>
            <person name="Jain S."/>
            <person name="Chiang Y.M."/>
            <person name="Wang C.C."/>
            <person name="Oakley B.R."/>
        </authorList>
    </citation>
    <scope>FUNCTION</scope>
    <scope>DISRUPTION PHENOTYPE</scope>
    <scope>PATHWAY</scope>
</reference>
<reference key="5">
    <citation type="journal article" date="2012" name="ChemBioChem">
        <title>Genetic and biosynthetic studies of the fungal prenylated xanthone shamixanthone and related metabolites in Aspergillus spp. revisited.</title>
        <authorList>
            <person name="Simpson T.J."/>
        </authorList>
    </citation>
    <scope>FUNCTION</scope>
    <scope>DISRUPTION PHENOTYPE</scope>
    <scope>PATHWAY</scope>
</reference>
<reference key="6">
    <citation type="journal article" date="2012" name="J. Am. Chem. Soc.">
        <title>Tautomers of anthrahydroquinones: enzymatic reduction and implications for chrysophanol, monodictyphenone, and related xanthone biosyntheses.</title>
        <authorList>
            <person name="Schaetzle M.A."/>
            <person name="Husain S.M."/>
            <person name="Ferlaino S."/>
            <person name="Mueller M."/>
        </authorList>
    </citation>
    <scope>FUNCTION</scope>
    <scope>CATALYTIC ACTIVITY</scope>
    <scope>PATHWAY</scope>
</reference>
<reference key="7">
    <citation type="journal article" date="2015" name="J. Am. Chem. Soc.">
        <title>New insights into the conversion of versicolorin A in the biosynthesis of aflatoxin B1.</title>
        <authorList>
            <person name="Conradt D."/>
            <person name="Schaetzle M.A."/>
            <person name="Haas J."/>
            <person name="Townsend C.A."/>
            <person name="Mueller M."/>
        </authorList>
    </citation>
    <scope>FUNCTION</scope>
    <scope>CATALYTIC ACTIVITY</scope>
    <scope>PATHWAY</scope>
</reference>
<feature type="chain" id="PRO_0000437105" description="Short chain dehydrogenase mdpC">
    <location>
        <begin position="1"/>
        <end position="265"/>
    </location>
</feature>
<feature type="active site" description="Proton donor" evidence="2">
    <location>
        <position position="147"/>
    </location>
</feature>
<feature type="active site" description="Proton donor" evidence="2">
    <location>
        <position position="148"/>
    </location>
</feature>
<feature type="active site" description="Proton acceptor" evidence="4">
    <location>
        <position position="162"/>
    </location>
</feature>
<feature type="active site" description="Lowers pKa of active site Tyr" evidence="2">
    <location>
        <position position="166"/>
    </location>
</feature>
<feature type="binding site" evidence="1">
    <location>
        <position position="25"/>
    </location>
    <ligand>
        <name>NADP(+)</name>
        <dbReference type="ChEBI" id="CHEBI:58349"/>
    </ligand>
</feature>
<feature type="binding site" evidence="2">
    <location>
        <position position="98"/>
    </location>
    <ligand>
        <name>NADP(+)</name>
        <dbReference type="ChEBI" id="CHEBI:58349"/>
    </ligand>
</feature>
<feature type="binding site" evidence="1">
    <location>
        <position position="131"/>
    </location>
    <ligand>
        <name>NADP(+)</name>
        <dbReference type="ChEBI" id="CHEBI:58349"/>
    </ligand>
</feature>
<feature type="binding site" evidence="2">
    <location>
        <position position="162"/>
    </location>
    <ligand>
        <name>NADP(+)</name>
        <dbReference type="ChEBI" id="CHEBI:58349"/>
    </ligand>
</feature>
<feature type="binding site" evidence="2">
    <location>
        <position position="166"/>
    </location>
    <ligand>
        <name>NADP(+)</name>
        <dbReference type="ChEBI" id="CHEBI:58349"/>
    </ligand>
</feature>
<feature type="binding site" evidence="1">
    <location>
        <position position="197"/>
    </location>
    <ligand>
        <name>NADP(+)</name>
        <dbReference type="ChEBI" id="CHEBI:58349"/>
    </ligand>
</feature>
<name>MDPC_EMENI</name>
<evidence type="ECO:0000250" key="1">
    <source>
        <dbReference type="UniProtKB" id="L0E2Z4"/>
    </source>
</evidence>
<evidence type="ECO:0000250" key="2">
    <source>
        <dbReference type="UniProtKB" id="O93868"/>
    </source>
</evidence>
<evidence type="ECO:0000250" key="3">
    <source>
        <dbReference type="UniProtKB" id="Q0CCY3"/>
    </source>
</evidence>
<evidence type="ECO:0000255" key="4">
    <source>
        <dbReference type="PROSITE-ProRule" id="PRU10001"/>
    </source>
</evidence>
<evidence type="ECO:0000269" key="5">
    <source>
    </source>
</evidence>
<evidence type="ECO:0000269" key="6">
    <source>
    </source>
</evidence>
<evidence type="ECO:0000269" key="7">
    <source>
    </source>
</evidence>
<evidence type="ECO:0000269" key="8">
    <source>
    </source>
</evidence>
<evidence type="ECO:0000269" key="9">
    <source>
    </source>
</evidence>
<evidence type="ECO:0000303" key="10">
    <source>
    </source>
</evidence>
<evidence type="ECO:0000305" key="11"/>
<gene>
    <name evidence="10" type="primary">mdpC</name>
    <name type="ORF">AN0146</name>
</gene>